<proteinExistence type="inferred from homology"/>
<gene>
    <name type="primary">RPLP2</name>
</gene>
<keyword id="KW-0007">Acetylation</keyword>
<keyword id="KW-0597">Phosphoprotein</keyword>
<keyword id="KW-1185">Reference proteome</keyword>
<keyword id="KW-0687">Ribonucleoprotein</keyword>
<keyword id="KW-0689">Ribosomal protein</keyword>
<evidence type="ECO:0000250" key="1"/>
<evidence type="ECO:0000250" key="2">
    <source>
        <dbReference type="UniProtKB" id="P05387"/>
    </source>
</evidence>
<evidence type="ECO:0000250" key="3">
    <source>
        <dbReference type="UniProtKB" id="P99027"/>
    </source>
</evidence>
<evidence type="ECO:0000256" key="4">
    <source>
        <dbReference type="SAM" id="MobiDB-lite"/>
    </source>
</evidence>
<evidence type="ECO:0000305" key="5"/>
<accession>P42899</accession>
<accession>Q2YDN3</accession>
<reference key="1">
    <citation type="journal article" date="1997" name="DNA Seq.">
        <title>Cloning and sequence analysis of a cDNA encoding bovine ribosomal protein P2: predicted alpha-helices and potential phosphorylation sites.</title>
        <authorList>
            <person name="Tan D.-P."/>
        </authorList>
    </citation>
    <scope>NUCLEOTIDE SEQUENCE [MRNA]</scope>
    <source>
        <tissue>Hypothalamus</tissue>
    </source>
</reference>
<reference key="2">
    <citation type="submission" date="2005-11" db="EMBL/GenBank/DDBJ databases">
        <authorList>
            <consortium name="NIH - Mammalian Gene Collection (MGC) project"/>
        </authorList>
    </citation>
    <scope>NUCLEOTIDE SEQUENCE [LARGE SCALE MRNA]</scope>
    <source>
        <strain>Crossbred X Angus</strain>
        <tissue>Liver</tissue>
    </source>
</reference>
<organism>
    <name type="scientific">Bos taurus</name>
    <name type="common">Bovine</name>
    <dbReference type="NCBI Taxonomy" id="9913"/>
    <lineage>
        <taxon>Eukaryota</taxon>
        <taxon>Metazoa</taxon>
        <taxon>Chordata</taxon>
        <taxon>Craniata</taxon>
        <taxon>Vertebrata</taxon>
        <taxon>Euteleostomi</taxon>
        <taxon>Mammalia</taxon>
        <taxon>Eutheria</taxon>
        <taxon>Laurasiatheria</taxon>
        <taxon>Artiodactyla</taxon>
        <taxon>Ruminantia</taxon>
        <taxon>Pecora</taxon>
        <taxon>Bovidae</taxon>
        <taxon>Bovinae</taxon>
        <taxon>Bos</taxon>
    </lineage>
</organism>
<feature type="chain" id="PRO_0000157638" description="Large ribosomal subunit protein P2">
    <location>
        <begin position="1"/>
        <end position="115"/>
    </location>
</feature>
<feature type="region of interest" description="Disordered" evidence="4">
    <location>
        <begin position="76"/>
        <end position="115"/>
    </location>
</feature>
<feature type="compositionally biased region" description="Low complexity" evidence="4">
    <location>
        <begin position="76"/>
        <end position="90"/>
    </location>
</feature>
<feature type="compositionally biased region" description="Basic and acidic residues" evidence="4">
    <location>
        <begin position="91"/>
        <end position="101"/>
    </location>
</feature>
<feature type="modified residue" description="N-acetylmethionine" evidence="2">
    <location>
        <position position="1"/>
    </location>
</feature>
<feature type="modified residue" description="Phosphoserine" evidence="2">
    <location>
        <position position="17"/>
    </location>
</feature>
<feature type="modified residue" description="Phosphoserine" evidence="2">
    <location>
        <position position="19"/>
    </location>
</feature>
<feature type="modified residue" description="N6-acetyllysine; alternate" evidence="2">
    <location>
        <position position="21"/>
    </location>
</feature>
<feature type="modified residue" description="N6-succinyllysine; alternate" evidence="3">
    <location>
        <position position="21"/>
    </location>
</feature>
<feature type="modified residue" description="Phosphoserine" evidence="2">
    <location>
        <position position="79"/>
    </location>
</feature>
<feature type="modified residue" description="Phosphoserine" evidence="2">
    <location>
        <position position="86"/>
    </location>
</feature>
<feature type="modified residue" description="Phosphoserine" evidence="2">
    <location>
        <position position="102"/>
    </location>
</feature>
<feature type="modified residue" description="Phosphoserine" evidence="3">
    <location>
        <position position="105"/>
    </location>
</feature>
<name>RLA2_BOVIN</name>
<protein>
    <recommendedName>
        <fullName evidence="5">Large ribosomal subunit protein P2</fullName>
    </recommendedName>
    <alternativeName>
        <fullName>60S acidic ribosomal protein P2</fullName>
    </alternativeName>
</protein>
<comment type="function">
    <text>Plays an important role in the elongation step of protein synthesis.</text>
</comment>
<comment type="subunit">
    <text evidence="1">Heterodimer with RPLP1 at the lateral ribosomal stalk of the large ribosomal subunit.</text>
</comment>
<comment type="similarity">
    <text evidence="5">Belongs to the eukaryotic ribosomal protein P1/P2 family.</text>
</comment>
<dbReference type="EMBL" id="U17836">
    <property type="protein sequence ID" value="AAC48755.1"/>
    <property type="molecule type" value="mRNA"/>
</dbReference>
<dbReference type="EMBL" id="BC110143">
    <property type="protein sequence ID" value="AAI10144.1"/>
    <property type="molecule type" value="mRNA"/>
</dbReference>
<dbReference type="RefSeq" id="NP_777213.1">
    <property type="nucleotide sequence ID" value="NM_174788.4"/>
</dbReference>
<dbReference type="BMRB" id="P42899"/>
<dbReference type="SMR" id="P42899"/>
<dbReference type="FunCoup" id="P42899">
    <property type="interactions" value="1854"/>
</dbReference>
<dbReference type="STRING" id="9913.ENSBTAP00000002326"/>
<dbReference type="PaxDb" id="9913-ENSBTAP00000002326"/>
<dbReference type="PeptideAtlas" id="P42899"/>
<dbReference type="GeneID" id="286853"/>
<dbReference type="KEGG" id="bta:286853"/>
<dbReference type="CTD" id="6181"/>
<dbReference type="VEuPathDB" id="HostDB:ENSBTAG00000001777"/>
<dbReference type="eggNOG" id="KOG3449">
    <property type="taxonomic scope" value="Eukaryota"/>
</dbReference>
<dbReference type="HOGENOM" id="CLU_114656_0_2_1"/>
<dbReference type="InParanoid" id="P42899"/>
<dbReference type="OMA" id="MKVIASY"/>
<dbReference type="OrthoDB" id="1227494at2759"/>
<dbReference type="TreeFam" id="TF320650"/>
<dbReference type="Reactome" id="R-BTA-156827">
    <property type="pathway name" value="L13a-mediated translational silencing of Ceruloplasmin expression"/>
</dbReference>
<dbReference type="Reactome" id="R-BTA-1799339">
    <property type="pathway name" value="SRP-dependent cotranslational protein targeting to membrane"/>
</dbReference>
<dbReference type="Reactome" id="R-BTA-6791226">
    <property type="pathway name" value="Major pathway of rRNA processing in the nucleolus and cytosol"/>
</dbReference>
<dbReference type="Reactome" id="R-BTA-72689">
    <property type="pathway name" value="Formation of a pool of free 40S subunits"/>
</dbReference>
<dbReference type="Reactome" id="R-BTA-72706">
    <property type="pathway name" value="GTP hydrolysis and joining of the 60S ribosomal subunit"/>
</dbReference>
<dbReference type="Reactome" id="R-BTA-975956">
    <property type="pathway name" value="Nonsense Mediated Decay (NMD) independent of the Exon Junction Complex (EJC)"/>
</dbReference>
<dbReference type="Reactome" id="R-BTA-975957">
    <property type="pathway name" value="Nonsense Mediated Decay (NMD) enhanced by the Exon Junction Complex (EJC)"/>
</dbReference>
<dbReference type="Proteomes" id="UP000009136">
    <property type="component" value="Chromosome 29"/>
</dbReference>
<dbReference type="Bgee" id="ENSBTAG00000001777">
    <property type="expression patterns" value="Expressed in bone marrow and 107 other cell types or tissues"/>
</dbReference>
<dbReference type="GO" id="GO:0022625">
    <property type="term" value="C:cytosolic large ribosomal subunit"/>
    <property type="evidence" value="ECO:0007669"/>
    <property type="project" value="InterPro"/>
</dbReference>
<dbReference type="GO" id="GO:0003735">
    <property type="term" value="F:structural constituent of ribosome"/>
    <property type="evidence" value="ECO:0007669"/>
    <property type="project" value="InterPro"/>
</dbReference>
<dbReference type="GO" id="GO:0002182">
    <property type="term" value="P:cytoplasmic translational elongation"/>
    <property type="evidence" value="ECO:0007669"/>
    <property type="project" value="InterPro"/>
</dbReference>
<dbReference type="CDD" id="cd05833">
    <property type="entry name" value="Ribosomal_P2"/>
    <property type="match status" value="1"/>
</dbReference>
<dbReference type="FunFam" id="1.10.10.1410:FF:000002">
    <property type="entry name" value="60S acidic ribosomal protein P2"/>
    <property type="match status" value="1"/>
</dbReference>
<dbReference type="Gene3D" id="1.10.10.1410">
    <property type="match status" value="1"/>
</dbReference>
<dbReference type="HAMAP" id="MF_01478">
    <property type="entry name" value="Ribosomal_L12_arch"/>
    <property type="match status" value="1"/>
</dbReference>
<dbReference type="InterPro" id="IPR038716">
    <property type="entry name" value="P1/P2_N_sf"/>
</dbReference>
<dbReference type="InterPro" id="IPR027534">
    <property type="entry name" value="Ribosomal_P1/P2"/>
</dbReference>
<dbReference type="InterPro" id="IPR044076">
    <property type="entry name" value="Ribosomal_P2"/>
</dbReference>
<dbReference type="PANTHER" id="PTHR21141">
    <property type="entry name" value="60S ACIDIC RIBOSOMAL PROTEIN FAMILY MEMBER"/>
    <property type="match status" value="1"/>
</dbReference>
<dbReference type="PANTHER" id="PTHR21141:SF5">
    <property type="entry name" value="LARGE RIBOSOMAL SUBUNIT PROTEIN P2"/>
    <property type="match status" value="1"/>
</dbReference>
<dbReference type="Pfam" id="PF00428">
    <property type="entry name" value="Ribosomal_60s"/>
    <property type="match status" value="1"/>
</dbReference>
<sequence length="115" mass="11702">MRYVASYLLAALGGNSSPSAKDIKKILDSVGIEADDDRLNKVISELHGKNIEDVIAQGIGKLASVPAGGAVAVSAAPGSAAPAAGSAPAAAEEKKEEKKEESEESDDDMGFGLFD</sequence>